<sequence length="156" mass="17950">MSRRHAAEKREILPDAKFGDTVLTKFMNNLMIDGKKSVAESIVYNALDRVQTRLKREPLEAFHEALDNVKPSVEVRSRRVGGATYQVPVEVRTERREALAIRWLITAARKRNENTMEERLAAELADACNNRGTAVKKREDTHKMADANKAFSHYRW</sequence>
<keyword id="KW-0687">Ribonucleoprotein</keyword>
<keyword id="KW-0689">Ribosomal protein</keyword>
<keyword id="KW-0694">RNA-binding</keyword>
<keyword id="KW-0699">rRNA-binding</keyword>
<keyword id="KW-0820">tRNA-binding</keyword>
<organism>
    <name type="scientific">Cereibacter sphaeroides (strain KD131 / KCTC 12085)</name>
    <name type="common">Rhodobacter sphaeroides</name>
    <dbReference type="NCBI Taxonomy" id="557760"/>
    <lineage>
        <taxon>Bacteria</taxon>
        <taxon>Pseudomonadati</taxon>
        <taxon>Pseudomonadota</taxon>
        <taxon>Alphaproteobacteria</taxon>
        <taxon>Rhodobacterales</taxon>
        <taxon>Paracoccaceae</taxon>
        <taxon>Cereibacter</taxon>
    </lineage>
</organism>
<comment type="function">
    <text evidence="1">One of the primary rRNA binding proteins, it binds directly to 16S rRNA where it nucleates assembly of the head domain of the 30S subunit. Is located at the subunit interface close to the decoding center, probably blocks exit of the E-site tRNA.</text>
</comment>
<comment type="subunit">
    <text evidence="1">Part of the 30S ribosomal subunit. Contacts proteins S9 and S11.</text>
</comment>
<comment type="similarity">
    <text evidence="1">Belongs to the universal ribosomal protein uS7 family.</text>
</comment>
<protein>
    <recommendedName>
        <fullName evidence="1">Small ribosomal subunit protein uS7</fullName>
    </recommendedName>
    <alternativeName>
        <fullName evidence="2">30S ribosomal protein S7</fullName>
    </alternativeName>
</protein>
<proteinExistence type="inferred from homology"/>
<gene>
    <name evidence="1" type="primary">rpsG</name>
    <name type="ordered locus">RSKD131_0010</name>
</gene>
<evidence type="ECO:0000255" key="1">
    <source>
        <dbReference type="HAMAP-Rule" id="MF_00480"/>
    </source>
</evidence>
<evidence type="ECO:0000305" key="2"/>
<feature type="chain" id="PRO_1000135620" description="Small ribosomal subunit protein uS7">
    <location>
        <begin position="1"/>
        <end position="156"/>
    </location>
</feature>
<reference key="1">
    <citation type="journal article" date="2009" name="J. Bacteriol.">
        <title>Complete genome sequence of Rhodobacter sphaeroides KD131.</title>
        <authorList>
            <person name="Lim S.-K."/>
            <person name="Kim S.J."/>
            <person name="Cha S.H."/>
            <person name="Oh Y.-K."/>
            <person name="Rhee H.-J."/>
            <person name="Kim M.-S."/>
            <person name="Lee J.K."/>
        </authorList>
    </citation>
    <scope>NUCLEOTIDE SEQUENCE [LARGE SCALE GENOMIC DNA]</scope>
    <source>
        <strain>KD131 / KCTC 12085</strain>
    </source>
</reference>
<name>RS7_CERSK</name>
<accession>B9KL87</accession>
<dbReference type="EMBL" id="CP001150">
    <property type="protein sequence ID" value="ACL99869.1"/>
    <property type="molecule type" value="Genomic_DNA"/>
</dbReference>
<dbReference type="RefSeq" id="WP_002722484.1">
    <property type="nucleotide sequence ID" value="NC_011963.1"/>
</dbReference>
<dbReference type="SMR" id="B9KL87"/>
<dbReference type="GeneID" id="67445496"/>
<dbReference type="KEGG" id="rsk:RSKD131_0010"/>
<dbReference type="HOGENOM" id="CLU_072226_1_1_5"/>
<dbReference type="GO" id="GO:0015935">
    <property type="term" value="C:small ribosomal subunit"/>
    <property type="evidence" value="ECO:0007669"/>
    <property type="project" value="InterPro"/>
</dbReference>
<dbReference type="GO" id="GO:0019843">
    <property type="term" value="F:rRNA binding"/>
    <property type="evidence" value="ECO:0007669"/>
    <property type="project" value="UniProtKB-UniRule"/>
</dbReference>
<dbReference type="GO" id="GO:0003735">
    <property type="term" value="F:structural constituent of ribosome"/>
    <property type="evidence" value="ECO:0007669"/>
    <property type="project" value="InterPro"/>
</dbReference>
<dbReference type="GO" id="GO:0000049">
    <property type="term" value="F:tRNA binding"/>
    <property type="evidence" value="ECO:0007669"/>
    <property type="project" value="UniProtKB-UniRule"/>
</dbReference>
<dbReference type="GO" id="GO:0006412">
    <property type="term" value="P:translation"/>
    <property type="evidence" value="ECO:0007669"/>
    <property type="project" value="UniProtKB-UniRule"/>
</dbReference>
<dbReference type="CDD" id="cd14869">
    <property type="entry name" value="uS7_Bacteria"/>
    <property type="match status" value="1"/>
</dbReference>
<dbReference type="FunFam" id="1.10.455.10:FF:000001">
    <property type="entry name" value="30S ribosomal protein S7"/>
    <property type="match status" value="1"/>
</dbReference>
<dbReference type="Gene3D" id="1.10.455.10">
    <property type="entry name" value="Ribosomal protein S7 domain"/>
    <property type="match status" value="1"/>
</dbReference>
<dbReference type="HAMAP" id="MF_00480_B">
    <property type="entry name" value="Ribosomal_uS7_B"/>
    <property type="match status" value="1"/>
</dbReference>
<dbReference type="InterPro" id="IPR000235">
    <property type="entry name" value="Ribosomal_uS7"/>
</dbReference>
<dbReference type="InterPro" id="IPR005717">
    <property type="entry name" value="Ribosomal_uS7_bac/org-type"/>
</dbReference>
<dbReference type="InterPro" id="IPR020606">
    <property type="entry name" value="Ribosomal_uS7_CS"/>
</dbReference>
<dbReference type="InterPro" id="IPR023798">
    <property type="entry name" value="Ribosomal_uS7_dom"/>
</dbReference>
<dbReference type="InterPro" id="IPR036823">
    <property type="entry name" value="Ribosomal_uS7_dom_sf"/>
</dbReference>
<dbReference type="NCBIfam" id="TIGR01029">
    <property type="entry name" value="rpsG_bact"/>
    <property type="match status" value="1"/>
</dbReference>
<dbReference type="PANTHER" id="PTHR11205">
    <property type="entry name" value="RIBOSOMAL PROTEIN S7"/>
    <property type="match status" value="1"/>
</dbReference>
<dbReference type="Pfam" id="PF00177">
    <property type="entry name" value="Ribosomal_S7"/>
    <property type="match status" value="1"/>
</dbReference>
<dbReference type="PIRSF" id="PIRSF002122">
    <property type="entry name" value="RPS7p_RPS7a_RPS5e_RPS7o"/>
    <property type="match status" value="1"/>
</dbReference>
<dbReference type="SUPFAM" id="SSF47973">
    <property type="entry name" value="Ribosomal protein S7"/>
    <property type="match status" value="1"/>
</dbReference>
<dbReference type="PROSITE" id="PS00052">
    <property type="entry name" value="RIBOSOMAL_S7"/>
    <property type="match status" value="1"/>
</dbReference>